<feature type="chain" id="PRO_0000272344" description="Aconitate hydratase A">
    <location>
        <begin position="1"/>
        <end position="878"/>
    </location>
</feature>
<feature type="binding site" evidence="2">
    <location>
        <position position="426"/>
    </location>
    <ligand>
        <name>[4Fe-4S] cluster</name>
        <dbReference type="ChEBI" id="CHEBI:49883"/>
    </ligand>
</feature>
<feature type="binding site" evidence="2">
    <location>
        <position position="492"/>
    </location>
    <ligand>
        <name>[4Fe-4S] cluster</name>
        <dbReference type="ChEBI" id="CHEBI:49883"/>
    </ligand>
</feature>
<feature type="binding site" evidence="2">
    <location>
        <position position="495"/>
    </location>
    <ligand>
        <name>[4Fe-4S] cluster</name>
        <dbReference type="ChEBI" id="CHEBI:49883"/>
    </ligand>
</feature>
<organism>
    <name type="scientific">Rickettsia typhi (strain ATCC VR-144 / Wilmington)</name>
    <dbReference type="NCBI Taxonomy" id="257363"/>
    <lineage>
        <taxon>Bacteria</taxon>
        <taxon>Pseudomonadati</taxon>
        <taxon>Pseudomonadota</taxon>
        <taxon>Alphaproteobacteria</taxon>
        <taxon>Rickettsiales</taxon>
        <taxon>Rickettsiaceae</taxon>
        <taxon>Rickettsieae</taxon>
        <taxon>Rickettsia</taxon>
        <taxon>typhus group</taxon>
    </lineage>
</organism>
<dbReference type="EC" id="4.2.1.3" evidence="3"/>
<dbReference type="EC" id="4.2.1.99" evidence="3"/>
<dbReference type="EMBL" id="AE017197">
    <property type="protein sequence ID" value="AAU04242.1"/>
    <property type="molecule type" value="Genomic_DNA"/>
</dbReference>
<dbReference type="RefSeq" id="WP_011191217.1">
    <property type="nucleotide sequence ID" value="NC_006142.1"/>
</dbReference>
<dbReference type="SMR" id="Q68VV0"/>
<dbReference type="KEGG" id="rty:RT0786"/>
<dbReference type="eggNOG" id="COG1048">
    <property type="taxonomic scope" value="Bacteria"/>
</dbReference>
<dbReference type="HOGENOM" id="CLU_013476_2_1_5"/>
<dbReference type="OrthoDB" id="9764318at2"/>
<dbReference type="UniPathway" id="UPA00223">
    <property type="reaction ID" value="UER00718"/>
</dbReference>
<dbReference type="UniPathway" id="UPA00946"/>
<dbReference type="Proteomes" id="UP000000604">
    <property type="component" value="Chromosome"/>
</dbReference>
<dbReference type="GO" id="GO:0047456">
    <property type="term" value="F:2-methylisocitrate dehydratase activity"/>
    <property type="evidence" value="ECO:0000250"/>
    <property type="project" value="UniProtKB"/>
</dbReference>
<dbReference type="GO" id="GO:0051539">
    <property type="term" value="F:4 iron, 4 sulfur cluster binding"/>
    <property type="evidence" value="ECO:0000250"/>
    <property type="project" value="UniProtKB"/>
</dbReference>
<dbReference type="GO" id="GO:0003994">
    <property type="term" value="F:aconitate hydratase activity"/>
    <property type="evidence" value="ECO:0000250"/>
    <property type="project" value="UniProtKB"/>
</dbReference>
<dbReference type="GO" id="GO:0046872">
    <property type="term" value="F:metal ion binding"/>
    <property type="evidence" value="ECO:0007669"/>
    <property type="project" value="UniProtKB-KW"/>
</dbReference>
<dbReference type="GO" id="GO:0003730">
    <property type="term" value="F:mRNA 3'-UTR binding"/>
    <property type="evidence" value="ECO:0000250"/>
    <property type="project" value="UniProtKB"/>
</dbReference>
<dbReference type="GO" id="GO:0003729">
    <property type="term" value="F:mRNA binding"/>
    <property type="evidence" value="ECO:0000250"/>
    <property type="project" value="UniProtKB"/>
</dbReference>
<dbReference type="GO" id="GO:0019679">
    <property type="term" value="P:propionate metabolic process, methylcitrate cycle"/>
    <property type="evidence" value="ECO:0000250"/>
    <property type="project" value="UniProtKB"/>
</dbReference>
<dbReference type="GO" id="GO:0006099">
    <property type="term" value="P:tricarboxylic acid cycle"/>
    <property type="evidence" value="ECO:0000250"/>
    <property type="project" value="UniProtKB"/>
</dbReference>
<dbReference type="CDD" id="cd01586">
    <property type="entry name" value="AcnA_IRP"/>
    <property type="match status" value="1"/>
</dbReference>
<dbReference type="CDD" id="cd01580">
    <property type="entry name" value="AcnA_IRP_Swivel"/>
    <property type="match status" value="1"/>
</dbReference>
<dbReference type="FunFam" id="3.20.19.10:FF:000001">
    <property type="entry name" value="Aconitate hydratase"/>
    <property type="match status" value="1"/>
</dbReference>
<dbReference type="FunFam" id="3.30.499.10:FF:000002">
    <property type="entry name" value="Aconitate hydratase"/>
    <property type="match status" value="1"/>
</dbReference>
<dbReference type="FunFam" id="3.30.499.10:FF:000020">
    <property type="entry name" value="Aconitate hydratase A"/>
    <property type="match status" value="1"/>
</dbReference>
<dbReference type="Gene3D" id="6.10.190.10">
    <property type="match status" value="1"/>
</dbReference>
<dbReference type="Gene3D" id="3.30.499.10">
    <property type="entry name" value="Aconitase, domain 3"/>
    <property type="match status" value="2"/>
</dbReference>
<dbReference type="Gene3D" id="3.20.19.10">
    <property type="entry name" value="Aconitase, domain 4"/>
    <property type="match status" value="1"/>
</dbReference>
<dbReference type="InterPro" id="IPR044137">
    <property type="entry name" value="AcnA_IRP_Swivel"/>
</dbReference>
<dbReference type="InterPro" id="IPR015931">
    <property type="entry name" value="Acnase/IPM_dHydase_lsu_aba_1/3"/>
</dbReference>
<dbReference type="InterPro" id="IPR001030">
    <property type="entry name" value="Acoase/IPM_deHydtase_lsu_aba"/>
</dbReference>
<dbReference type="InterPro" id="IPR015928">
    <property type="entry name" value="Aconitase/3IPM_dehydase_swvl"/>
</dbReference>
<dbReference type="InterPro" id="IPR006249">
    <property type="entry name" value="Aconitase/IRP2"/>
</dbReference>
<dbReference type="InterPro" id="IPR018136">
    <property type="entry name" value="Aconitase_4Fe-4S_BS"/>
</dbReference>
<dbReference type="InterPro" id="IPR036008">
    <property type="entry name" value="Aconitase_4Fe-4S_dom"/>
</dbReference>
<dbReference type="InterPro" id="IPR000573">
    <property type="entry name" value="AconitaseA/IPMdHydase_ssu_swvl"/>
</dbReference>
<dbReference type="NCBIfam" id="TIGR01341">
    <property type="entry name" value="aconitase_1"/>
    <property type="match status" value="1"/>
</dbReference>
<dbReference type="NCBIfam" id="NF006757">
    <property type="entry name" value="PRK09277.1"/>
    <property type="match status" value="1"/>
</dbReference>
<dbReference type="NCBIfam" id="NF009520">
    <property type="entry name" value="PRK12881.1"/>
    <property type="match status" value="1"/>
</dbReference>
<dbReference type="PANTHER" id="PTHR11670">
    <property type="entry name" value="ACONITASE/IRON-RESPONSIVE ELEMENT FAMILY MEMBER"/>
    <property type="match status" value="1"/>
</dbReference>
<dbReference type="Pfam" id="PF00330">
    <property type="entry name" value="Aconitase"/>
    <property type="match status" value="1"/>
</dbReference>
<dbReference type="Pfam" id="PF00694">
    <property type="entry name" value="Aconitase_C"/>
    <property type="match status" value="1"/>
</dbReference>
<dbReference type="PRINTS" id="PR00415">
    <property type="entry name" value="ACONITASE"/>
</dbReference>
<dbReference type="SUPFAM" id="SSF53732">
    <property type="entry name" value="Aconitase iron-sulfur domain"/>
    <property type="match status" value="1"/>
</dbReference>
<dbReference type="SUPFAM" id="SSF52016">
    <property type="entry name" value="LeuD/IlvD-like"/>
    <property type="match status" value="1"/>
</dbReference>
<dbReference type="PROSITE" id="PS00450">
    <property type="entry name" value="ACONITASE_1"/>
    <property type="match status" value="1"/>
</dbReference>
<dbReference type="PROSITE" id="PS01244">
    <property type="entry name" value="ACONITASE_2"/>
    <property type="match status" value="1"/>
</dbReference>
<sequence length="878" mass="97236">MPTVHNSEYIKELLVDNTSYKIYDINKAASDIGISLNKLPYSLRVLLENVLRTSGNKENLLVFKEWLKTKKSNTEIDFMPARVLMQDFTGVPAIVDLAAMRDAMQKIGCNPLKINPLIPVDLVIDHSVSVDSYGLKESFEQNVQMEMKRNIERYQFLKWGQQAFNNFKVVPPGTGICHQVNLEYLSKVVWYNDGTAYPDSLVGTDSHTTMVNGLSVLGWGVGGIEAEAAMLGQPLTMIIPEVIGVKLTGKLEGMATATDLVLTITEMLRRTKVVGKFVEFFGYGLSNLTISDRATISNMSPEYGATCGFFPIDQETIKYLEITGRETRQIKLVEKYATEQNLWYNFEDTQEYTEVLELDLSTVYSSLAGPKRPQDRVNLSFVESNFKNELPYFALENQDIDKKYAVANQNYEIGNGDVVIAAITSCTNTSNPSVMIGAALLAKKALEHGLNVKPWVKTSLAPGSKVVTEYLKISGLDKYLDALGFNLVGYGCTTCIGNSGSLNPEIENTINKNRLVVASVLSGNRNFEGRINPLTKASYLASPILVVAYALSGTLNIDLTTTPIGANIYLKDIWPSQKEIDAVIANSINPSMFIEKYADVFNGTKEWHDLHITTGTNYNWDKNSTYINNPPYFDNICSENTIKDIKSAKILAIFGDSITTDHISPAGSISKNSPAAKYLIEHNIEPLNFNSYGSRRGNHEVMMRGTFANIRIKNEMCNGVEGGFTINQLSGVQQTIYDAAMDYQAHDIPLVVFAGKEYGSGSSRDWAAKGPGLLGIKAIIAESFERIHRSNLVGMGILPLTFTGNNTRLSLKLDGSETIDIIGLSKNIRPFNLVKCVIKKQTNEISTIDLILQIFTENEINYIKHGSIMQFVVESLKG</sequence>
<accession>Q68VV0</accession>
<protein>
    <recommendedName>
        <fullName evidence="3">Aconitate hydratase A</fullName>
        <shortName evidence="3">ACN</shortName>
        <shortName evidence="3">Aconitase</shortName>
        <ecNumber evidence="3">4.2.1.3</ecNumber>
    </recommendedName>
    <alternativeName>
        <fullName evidence="3">(2R,3S)-2-methylisocitrate dehydratase</fullName>
    </alternativeName>
    <alternativeName>
        <fullName evidence="3">(2S,3R)-3-hydroxybutane-1,2,3-tricarboxylate dehydratase</fullName>
    </alternativeName>
    <alternativeName>
        <fullName evidence="1">Iron-responsive protein-like</fullName>
        <shortName evidence="1">IRP-like</shortName>
    </alternativeName>
    <alternativeName>
        <fullName evidence="3">Probable 2-methyl-cis-aconitate hydratase</fullName>
        <ecNumber evidence="3">4.2.1.99</ecNumber>
    </alternativeName>
    <alternativeName>
        <fullName evidence="1">RNA-binding protein</fullName>
    </alternativeName>
</protein>
<comment type="function">
    <text evidence="1 3">Involved in the catabolism of short chain fatty acids (SCFA) via the tricarboxylic acid (TCA)(acetyl degradation route) and probably the 2-methylcitrate cycle I (propionate degradation route). Catalyzes the reversible isomerization of citrate to isocitrate via cis-aconitate. Could catalyze the hydration of 2-methyl-cis-aconitate to yield (2R,3S)-2-methylisocitrate. The apo form of AcnA functions as a RNA-binding regulatory protein.</text>
</comment>
<comment type="catalytic activity">
    <reaction evidence="3">
        <text>citrate = D-threo-isocitrate</text>
        <dbReference type="Rhea" id="RHEA:10336"/>
        <dbReference type="ChEBI" id="CHEBI:15562"/>
        <dbReference type="ChEBI" id="CHEBI:16947"/>
        <dbReference type="EC" id="4.2.1.3"/>
    </reaction>
</comment>
<comment type="catalytic activity">
    <reaction evidence="3">
        <text>(2S,3R)-3-hydroxybutane-1,2,3-tricarboxylate = 2-methyl-cis-aconitate + H2O</text>
        <dbReference type="Rhea" id="RHEA:17941"/>
        <dbReference type="ChEBI" id="CHEBI:15377"/>
        <dbReference type="ChEBI" id="CHEBI:57429"/>
        <dbReference type="ChEBI" id="CHEBI:57872"/>
        <dbReference type="EC" id="4.2.1.99"/>
    </reaction>
</comment>
<comment type="cofactor">
    <cofactor evidence="1">
        <name>[4Fe-4S] cluster</name>
        <dbReference type="ChEBI" id="CHEBI:49883"/>
    </cofactor>
    <text evidence="1">Binds 1 [4Fe-4S] cluster per subunit.</text>
</comment>
<comment type="pathway">
    <text evidence="3">Carbohydrate metabolism; tricarboxylic acid cycle; isocitrate from oxaloacetate: step 2/2.</text>
</comment>
<comment type="pathway">
    <text evidence="3">Organic acid metabolism; propanoate degradation.</text>
</comment>
<comment type="subunit">
    <text evidence="1">Monomer.</text>
</comment>
<comment type="similarity">
    <text evidence="4">Belongs to the aconitase/IPM isomerase family.</text>
</comment>
<gene>
    <name type="primary">acnA</name>
    <name type="ordered locus">RT0786</name>
</gene>
<reference key="1">
    <citation type="journal article" date="2004" name="J. Bacteriol.">
        <title>Complete genome sequence of Rickettsia typhi and comparison with sequences of other Rickettsiae.</title>
        <authorList>
            <person name="McLeod M.P."/>
            <person name="Qin X."/>
            <person name="Karpathy S.E."/>
            <person name="Gioia J."/>
            <person name="Highlander S.K."/>
            <person name="Fox G.E."/>
            <person name="McNeill T.Z."/>
            <person name="Jiang H."/>
            <person name="Muzny D."/>
            <person name="Jacob L.S."/>
            <person name="Hawes A.C."/>
            <person name="Sodergren E."/>
            <person name="Gill R."/>
            <person name="Hume J."/>
            <person name="Morgan M."/>
            <person name="Fan G."/>
            <person name="Amin A.G."/>
            <person name="Gibbs R.A."/>
            <person name="Hong C."/>
            <person name="Yu X.-J."/>
            <person name="Walker D.H."/>
            <person name="Weinstock G.M."/>
        </authorList>
    </citation>
    <scope>NUCLEOTIDE SEQUENCE [LARGE SCALE GENOMIC DNA]</scope>
    <source>
        <strain>ATCC VR-144 / Wilmington</strain>
    </source>
</reference>
<proteinExistence type="inferred from homology"/>
<name>ACNA_RICTY</name>
<keyword id="KW-0004">4Fe-4S</keyword>
<keyword id="KW-0408">Iron</keyword>
<keyword id="KW-0411">Iron-sulfur</keyword>
<keyword id="KW-0456">Lyase</keyword>
<keyword id="KW-0479">Metal-binding</keyword>
<keyword id="KW-0694">RNA-binding</keyword>
<keyword id="KW-0816">Tricarboxylic acid cycle</keyword>
<evidence type="ECO:0000250" key="1">
    <source>
        <dbReference type="UniProtKB" id="P09339"/>
    </source>
</evidence>
<evidence type="ECO:0000250" key="2">
    <source>
        <dbReference type="UniProtKB" id="P36683"/>
    </source>
</evidence>
<evidence type="ECO:0000250" key="3">
    <source>
        <dbReference type="UniProtKB" id="Q8ZP52"/>
    </source>
</evidence>
<evidence type="ECO:0000305" key="4"/>